<proteinExistence type="inferred from homology"/>
<protein>
    <recommendedName>
        <fullName evidence="2">D-alanine--D-alanine ligase</fullName>
        <ecNumber evidence="2">6.3.2.4</ecNumber>
    </recommendedName>
    <alternativeName>
        <fullName evidence="2">D-Ala-D-Ala ligase</fullName>
    </alternativeName>
    <alternativeName>
        <fullName evidence="2">D-alanylalanine synthetase</fullName>
    </alternativeName>
</protein>
<name>DDL_CHESB</name>
<gene>
    <name evidence="2" type="primary">ddl</name>
    <name type="ordered locus">Meso_2004</name>
</gene>
<dbReference type="EC" id="6.3.2.4" evidence="2"/>
<dbReference type="EMBL" id="CP000390">
    <property type="protein sequence ID" value="ABG63397.1"/>
    <property type="molecule type" value="Genomic_DNA"/>
</dbReference>
<dbReference type="SMR" id="Q11GS8"/>
<dbReference type="STRING" id="266779.Meso_2004"/>
<dbReference type="KEGG" id="mes:Meso_2004"/>
<dbReference type="eggNOG" id="COG1181">
    <property type="taxonomic scope" value="Bacteria"/>
</dbReference>
<dbReference type="HOGENOM" id="CLU_039268_1_1_5"/>
<dbReference type="OrthoDB" id="9813261at2"/>
<dbReference type="UniPathway" id="UPA00219"/>
<dbReference type="GO" id="GO:0005737">
    <property type="term" value="C:cytoplasm"/>
    <property type="evidence" value="ECO:0007669"/>
    <property type="project" value="UniProtKB-SubCell"/>
</dbReference>
<dbReference type="GO" id="GO:0005524">
    <property type="term" value="F:ATP binding"/>
    <property type="evidence" value="ECO:0007669"/>
    <property type="project" value="UniProtKB-KW"/>
</dbReference>
<dbReference type="GO" id="GO:0008716">
    <property type="term" value="F:D-alanine-D-alanine ligase activity"/>
    <property type="evidence" value="ECO:0007669"/>
    <property type="project" value="UniProtKB-UniRule"/>
</dbReference>
<dbReference type="GO" id="GO:0046872">
    <property type="term" value="F:metal ion binding"/>
    <property type="evidence" value="ECO:0007669"/>
    <property type="project" value="UniProtKB-KW"/>
</dbReference>
<dbReference type="GO" id="GO:0071555">
    <property type="term" value="P:cell wall organization"/>
    <property type="evidence" value="ECO:0007669"/>
    <property type="project" value="UniProtKB-KW"/>
</dbReference>
<dbReference type="GO" id="GO:0009252">
    <property type="term" value="P:peptidoglycan biosynthetic process"/>
    <property type="evidence" value="ECO:0007669"/>
    <property type="project" value="UniProtKB-UniRule"/>
</dbReference>
<dbReference type="GO" id="GO:0008360">
    <property type="term" value="P:regulation of cell shape"/>
    <property type="evidence" value="ECO:0007669"/>
    <property type="project" value="UniProtKB-KW"/>
</dbReference>
<dbReference type="Gene3D" id="3.40.50.20">
    <property type="match status" value="1"/>
</dbReference>
<dbReference type="Gene3D" id="3.30.1490.20">
    <property type="entry name" value="ATP-grasp fold, A domain"/>
    <property type="match status" value="1"/>
</dbReference>
<dbReference type="Gene3D" id="3.30.470.20">
    <property type="entry name" value="ATP-grasp fold, B domain"/>
    <property type="match status" value="1"/>
</dbReference>
<dbReference type="HAMAP" id="MF_00047">
    <property type="entry name" value="Dala_Dala_lig"/>
    <property type="match status" value="1"/>
</dbReference>
<dbReference type="InterPro" id="IPR011761">
    <property type="entry name" value="ATP-grasp"/>
</dbReference>
<dbReference type="InterPro" id="IPR013815">
    <property type="entry name" value="ATP_grasp_subdomain_1"/>
</dbReference>
<dbReference type="InterPro" id="IPR000291">
    <property type="entry name" value="D-Ala_lig_Van_CS"/>
</dbReference>
<dbReference type="InterPro" id="IPR005905">
    <property type="entry name" value="D_ala_D_ala"/>
</dbReference>
<dbReference type="InterPro" id="IPR011095">
    <property type="entry name" value="Dala_Dala_lig_C"/>
</dbReference>
<dbReference type="InterPro" id="IPR011127">
    <property type="entry name" value="Dala_Dala_lig_N"/>
</dbReference>
<dbReference type="InterPro" id="IPR016185">
    <property type="entry name" value="PreATP-grasp_dom_sf"/>
</dbReference>
<dbReference type="NCBIfam" id="TIGR01205">
    <property type="entry name" value="D_ala_D_alaTIGR"/>
    <property type="match status" value="1"/>
</dbReference>
<dbReference type="NCBIfam" id="NF002378">
    <property type="entry name" value="PRK01372.1"/>
    <property type="match status" value="1"/>
</dbReference>
<dbReference type="PANTHER" id="PTHR23132">
    <property type="entry name" value="D-ALANINE--D-ALANINE LIGASE"/>
    <property type="match status" value="1"/>
</dbReference>
<dbReference type="PANTHER" id="PTHR23132:SF23">
    <property type="entry name" value="D-ALANINE--D-ALANINE LIGASE B"/>
    <property type="match status" value="1"/>
</dbReference>
<dbReference type="Pfam" id="PF07478">
    <property type="entry name" value="Dala_Dala_lig_C"/>
    <property type="match status" value="1"/>
</dbReference>
<dbReference type="Pfam" id="PF01820">
    <property type="entry name" value="Dala_Dala_lig_N"/>
    <property type="match status" value="1"/>
</dbReference>
<dbReference type="PIRSF" id="PIRSF039102">
    <property type="entry name" value="Ddl/VanB"/>
    <property type="match status" value="1"/>
</dbReference>
<dbReference type="SUPFAM" id="SSF56059">
    <property type="entry name" value="Glutathione synthetase ATP-binding domain-like"/>
    <property type="match status" value="1"/>
</dbReference>
<dbReference type="SUPFAM" id="SSF52440">
    <property type="entry name" value="PreATP-grasp domain"/>
    <property type="match status" value="1"/>
</dbReference>
<dbReference type="PROSITE" id="PS50975">
    <property type="entry name" value="ATP_GRASP"/>
    <property type="match status" value="1"/>
</dbReference>
<dbReference type="PROSITE" id="PS00843">
    <property type="entry name" value="DALA_DALA_LIGASE_1"/>
    <property type="match status" value="1"/>
</dbReference>
<dbReference type="PROSITE" id="PS00844">
    <property type="entry name" value="DALA_DALA_LIGASE_2"/>
    <property type="match status" value="1"/>
</dbReference>
<feature type="chain" id="PRO_1000030466" description="D-alanine--D-alanine ligase">
    <location>
        <begin position="1"/>
        <end position="308"/>
    </location>
</feature>
<feature type="domain" description="ATP-grasp" evidence="2">
    <location>
        <begin position="102"/>
        <end position="302"/>
    </location>
</feature>
<feature type="binding site" evidence="2">
    <location>
        <begin position="128"/>
        <end position="183"/>
    </location>
    <ligand>
        <name>ATP</name>
        <dbReference type="ChEBI" id="CHEBI:30616"/>
    </ligand>
</feature>
<feature type="binding site" evidence="2">
    <location>
        <position position="252"/>
    </location>
    <ligand>
        <name>Mg(2+)</name>
        <dbReference type="ChEBI" id="CHEBI:18420"/>
        <label>1</label>
    </ligand>
</feature>
<feature type="binding site" evidence="2">
    <location>
        <position position="269"/>
    </location>
    <ligand>
        <name>Mg(2+)</name>
        <dbReference type="ChEBI" id="CHEBI:18420"/>
        <label>1</label>
    </ligand>
</feature>
<feature type="binding site" evidence="2">
    <location>
        <position position="269"/>
    </location>
    <ligand>
        <name>Mg(2+)</name>
        <dbReference type="ChEBI" id="CHEBI:18420"/>
        <label>2</label>
    </ligand>
</feature>
<feature type="binding site" evidence="2">
    <location>
        <position position="271"/>
    </location>
    <ligand>
        <name>Mg(2+)</name>
        <dbReference type="ChEBI" id="CHEBI:18420"/>
        <label>2</label>
    </ligand>
</feature>
<accession>Q11GS8</accession>
<keyword id="KW-0067">ATP-binding</keyword>
<keyword id="KW-0133">Cell shape</keyword>
<keyword id="KW-0961">Cell wall biogenesis/degradation</keyword>
<keyword id="KW-0963">Cytoplasm</keyword>
<keyword id="KW-0436">Ligase</keyword>
<keyword id="KW-0460">Magnesium</keyword>
<keyword id="KW-0464">Manganese</keyword>
<keyword id="KW-0479">Metal-binding</keyword>
<keyword id="KW-0547">Nucleotide-binding</keyword>
<keyword id="KW-0573">Peptidoglycan synthesis</keyword>
<comment type="function">
    <text evidence="2">Cell wall formation.</text>
</comment>
<comment type="catalytic activity">
    <reaction evidence="2">
        <text>2 D-alanine + ATP = D-alanyl-D-alanine + ADP + phosphate + H(+)</text>
        <dbReference type="Rhea" id="RHEA:11224"/>
        <dbReference type="ChEBI" id="CHEBI:15378"/>
        <dbReference type="ChEBI" id="CHEBI:30616"/>
        <dbReference type="ChEBI" id="CHEBI:43474"/>
        <dbReference type="ChEBI" id="CHEBI:57416"/>
        <dbReference type="ChEBI" id="CHEBI:57822"/>
        <dbReference type="ChEBI" id="CHEBI:456216"/>
        <dbReference type="EC" id="6.3.2.4"/>
    </reaction>
</comment>
<comment type="cofactor">
    <cofactor evidence="1">
        <name>Mg(2+)</name>
        <dbReference type="ChEBI" id="CHEBI:18420"/>
    </cofactor>
    <cofactor evidence="1">
        <name>Mn(2+)</name>
        <dbReference type="ChEBI" id="CHEBI:29035"/>
    </cofactor>
    <text evidence="1">Binds 2 magnesium or manganese ions per subunit.</text>
</comment>
<comment type="pathway">
    <text evidence="2">Cell wall biogenesis; peptidoglycan biosynthesis.</text>
</comment>
<comment type="subcellular location">
    <subcellularLocation>
        <location evidence="2">Cytoplasm</location>
    </subcellularLocation>
</comment>
<comment type="similarity">
    <text evidence="2">Belongs to the D-alanine--D-alanine ligase family.</text>
</comment>
<evidence type="ECO:0000250" key="1"/>
<evidence type="ECO:0000255" key="2">
    <source>
        <dbReference type="HAMAP-Rule" id="MF_00047"/>
    </source>
</evidence>
<reference key="1">
    <citation type="submission" date="2006-06" db="EMBL/GenBank/DDBJ databases">
        <title>Complete sequence of chromosome of Mesorhizobium sp. BNC1.</title>
        <authorList>
            <consortium name="US DOE Joint Genome Institute"/>
            <person name="Copeland A."/>
            <person name="Lucas S."/>
            <person name="Lapidus A."/>
            <person name="Barry K."/>
            <person name="Detter J.C."/>
            <person name="Glavina del Rio T."/>
            <person name="Hammon N."/>
            <person name="Israni S."/>
            <person name="Dalin E."/>
            <person name="Tice H."/>
            <person name="Pitluck S."/>
            <person name="Chertkov O."/>
            <person name="Brettin T."/>
            <person name="Bruce D."/>
            <person name="Han C."/>
            <person name="Tapia R."/>
            <person name="Gilna P."/>
            <person name="Schmutz J."/>
            <person name="Larimer F."/>
            <person name="Land M."/>
            <person name="Hauser L."/>
            <person name="Kyrpides N."/>
            <person name="Mikhailova N."/>
            <person name="Richardson P."/>
        </authorList>
    </citation>
    <scope>NUCLEOTIDE SEQUENCE [LARGE SCALE GENOMIC DNA]</scope>
    <source>
        <strain>BNC1</strain>
    </source>
</reference>
<organism>
    <name type="scientific">Chelativorans sp. (strain BNC1)</name>
    <dbReference type="NCBI Taxonomy" id="266779"/>
    <lineage>
        <taxon>Bacteria</taxon>
        <taxon>Pseudomonadati</taxon>
        <taxon>Pseudomonadota</taxon>
        <taxon>Alphaproteobacteria</taxon>
        <taxon>Hyphomicrobiales</taxon>
        <taxon>Phyllobacteriaceae</taxon>
        <taxon>Chelativorans</taxon>
    </lineage>
</organism>
<sequence length="308" mass="33162">MKKKHVAVLMGGFSSERPVSLSSGNSCADALEAEGYRVSRVDVSRDVSRVLSELKPDVAFNALHGPFGEDGTVQGVLEYLGIPYTHSGVLASALAMDKDLAKTVAKSAGIPVASSRVMNRFEIGDKHPMEPPYVVKPVAEGSSFGVVIVREGQSHPPQVLGSAEWGYGERVMVERYIPGRELTCAVMGDRVLGVCEIVPVGHSFYDYDSKYAPGGSRHVCPAEISPNIYQKIERLALKAHQAIGCRGVSRSDFRYDDRLPGEEGIVWLEINTQPGMTPTSLVPDIAAQAGIGFGALLSWMVEDASCPR</sequence>